<gene>
    <name type="primary">FLYWCH1</name>
    <name type="synonym">KIAA1552</name>
</gene>
<accession>Q4VC44</accession>
<accession>D3DUA1</accession>
<accession>Q6ZSQ1</accession>
<accession>Q8WV62</accession>
<accession>Q9BQG6</accession>
<accession>Q9BUS5</accession>
<accession>Q9HCM0</accession>
<reference key="1">
    <citation type="journal article" date="2000" name="DNA Res.">
        <title>Prediction of the coding sequences of unidentified human genes. XVIII. The complete sequences of 100 new cDNA clones from brain which code for large proteins in vitro.</title>
        <authorList>
            <person name="Nagase T."/>
            <person name="Kikuno R."/>
            <person name="Nakayama M."/>
            <person name="Hirosawa M."/>
            <person name="Ohara O."/>
        </authorList>
    </citation>
    <scope>NUCLEOTIDE SEQUENCE [LARGE SCALE MRNA] (ISOFORM 2)</scope>
</reference>
<reference key="2">
    <citation type="journal article" date="2004" name="Nat. Genet.">
        <title>Complete sequencing and characterization of 21,243 full-length human cDNAs.</title>
        <authorList>
            <person name="Ota T."/>
            <person name="Suzuki Y."/>
            <person name="Nishikawa T."/>
            <person name="Otsuki T."/>
            <person name="Sugiyama T."/>
            <person name="Irie R."/>
            <person name="Wakamatsu A."/>
            <person name="Hayashi K."/>
            <person name="Sato H."/>
            <person name="Nagai K."/>
            <person name="Kimura K."/>
            <person name="Makita H."/>
            <person name="Sekine M."/>
            <person name="Obayashi M."/>
            <person name="Nishi T."/>
            <person name="Shibahara T."/>
            <person name="Tanaka T."/>
            <person name="Ishii S."/>
            <person name="Yamamoto J."/>
            <person name="Saito K."/>
            <person name="Kawai Y."/>
            <person name="Isono Y."/>
            <person name="Nakamura Y."/>
            <person name="Nagahari K."/>
            <person name="Murakami K."/>
            <person name="Yasuda T."/>
            <person name="Iwayanagi T."/>
            <person name="Wagatsuma M."/>
            <person name="Shiratori A."/>
            <person name="Sudo H."/>
            <person name="Hosoiri T."/>
            <person name="Kaku Y."/>
            <person name="Kodaira H."/>
            <person name="Kondo H."/>
            <person name="Sugawara M."/>
            <person name="Takahashi M."/>
            <person name="Kanda K."/>
            <person name="Yokoi T."/>
            <person name="Furuya T."/>
            <person name="Kikkawa E."/>
            <person name="Omura Y."/>
            <person name="Abe K."/>
            <person name="Kamihara K."/>
            <person name="Katsuta N."/>
            <person name="Sato K."/>
            <person name="Tanikawa M."/>
            <person name="Yamazaki M."/>
            <person name="Ninomiya K."/>
            <person name="Ishibashi T."/>
            <person name="Yamashita H."/>
            <person name="Murakawa K."/>
            <person name="Fujimori K."/>
            <person name="Tanai H."/>
            <person name="Kimata M."/>
            <person name="Watanabe M."/>
            <person name="Hiraoka S."/>
            <person name="Chiba Y."/>
            <person name="Ishida S."/>
            <person name="Ono Y."/>
            <person name="Takiguchi S."/>
            <person name="Watanabe S."/>
            <person name="Yosida M."/>
            <person name="Hotuta T."/>
            <person name="Kusano J."/>
            <person name="Kanehori K."/>
            <person name="Takahashi-Fujii A."/>
            <person name="Hara H."/>
            <person name="Tanase T.-O."/>
            <person name="Nomura Y."/>
            <person name="Togiya S."/>
            <person name="Komai F."/>
            <person name="Hara R."/>
            <person name="Takeuchi K."/>
            <person name="Arita M."/>
            <person name="Imose N."/>
            <person name="Musashino K."/>
            <person name="Yuuki H."/>
            <person name="Oshima A."/>
            <person name="Sasaki N."/>
            <person name="Aotsuka S."/>
            <person name="Yoshikawa Y."/>
            <person name="Matsunawa H."/>
            <person name="Ichihara T."/>
            <person name="Shiohata N."/>
            <person name="Sano S."/>
            <person name="Moriya S."/>
            <person name="Momiyama H."/>
            <person name="Satoh N."/>
            <person name="Takami S."/>
            <person name="Terashima Y."/>
            <person name="Suzuki O."/>
            <person name="Nakagawa S."/>
            <person name="Senoh A."/>
            <person name="Mizoguchi H."/>
            <person name="Goto Y."/>
            <person name="Shimizu F."/>
            <person name="Wakebe H."/>
            <person name="Hishigaki H."/>
            <person name="Watanabe T."/>
            <person name="Sugiyama A."/>
            <person name="Takemoto M."/>
            <person name="Kawakami B."/>
            <person name="Yamazaki M."/>
            <person name="Watanabe K."/>
            <person name="Kumagai A."/>
            <person name="Itakura S."/>
            <person name="Fukuzumi Y."/>
            <person name="Fujimori Y."/>
            <person name="Komiyama M."/>
            <person name="Tashiro H."/>
            <person name="Tanigami A."/>
            <person name="Fujiwara T."/>
            <person name="Ono T."/>
            <person name="Yamada K."/>
            <person name="Fujii Y."/>
            <person name="Ozaki K."/>
            <person name="Hirao M."/>
            <person name="Ohmori Y."/>
            <person name="Kawabata A."/>
            <person name="Hikiji T."/>
            <person name="Kobatake N."/>
            <person name="Inagaki H."/>
            <person name="Ikema Y."/>
            <person name="Okamoto S."/>
            <person name="Okitani R."/>
            <person name="Kawakami T."/>
            <person name="Noguchi S."/>
            <person name="Itoh T."/>
            <person name="Shigeta K."/>
            <person name="Senba T."/>
            <person name="Matsumura K."/>
            <person name="Nakajima Y."/>
            <person name="Mizuno T."/>
            <person name="Morinaga M."/>
            <person name="Sasaki M."/>
            <person name="Togashi T."/>
            <person name="Oyama M."/>
            <person name="Hata H."/>
            <person name="Watanabe M."/>
            <person name="Komatsu T."/>
            <person name="Mizushima-Sugano J."/>
            <person name="Satoh T."/>
            <person name="Shirai Y."/>
            <person name="Takahashi Y."/>
            <person name="Nakagawa K."/>
            <person name="Okumura K."/>
            <person name="Nagase T."/>
            <person name="Nomura N."/>
            <person name="Kikuchi H."/>
            <person name="Masuho Y."/>
            <person name="Yamashita R."/>
            <person name="Nakai K."/>
            <person name="Yada T."/>
            <person name="Nakamura Y."/>
            <person name="Ohara O."/>
            <person name="Isogai T."/>
            <person name="Sugano S."/>
        </authorList>
    </citation>
    <scope>NUCLEOTIDE SEQUENCE [LARGE SCALE MRNA] (ISOFORM 5)</scope>
    <source>
        <tissue>Hippocampus</tissue>
    </source>
</reference>
<reference key="3">
    <citation type="submission" date="2005-09" db="EMBL/GenBank/DDBJ databases">
        <authorList>
            <person name="Mural R.J."/>
            <person name="Istrail S."/>
            <person name="Sutton G.G."/>
            <person name="Florea L."/>
            <person name="Halpern A.L."/>
            <person name="Mobarry C.M."/>
            <person name="Lippert R."/>
            <person name="Walenz B."/>
            <person name="Shatkay H."/>
            <person name="Dew I."/>
            <person name="Miller J.R."/>
            <person name="Flanigan M.J."/>
            <person name="Edwards N.J."/>
            <person name="Bolanos R."/>
            <person name="Fasulo D."/>
            <person name="Halldorsson B.V."/>
            <person name="Hannenhalli S."/>
            <person name="Turner R."/>
            <person name="Yooseph S."/>
            <person name="Lu F."/>
            <person name="Nusskern D.R."/>
            <person name="Shue B.C."/>
            <person name="Zheng X.H."/>
            <person name="Zhong F."/>
            <person name="Delcher A.L."/>
            <person name="Huson D.H."/>
            <person name="Kravitz S.A."/>
            <person name="Mouchard L."/>
            <person name="Reinert K."/>
            <person name="Remington K.A."/>
            <person name="Clark A.G."/>
            <person name="Waterman M.S."/>
            <person name="Eichler E.E."/>
            <person name="Adams M.D."/>
            <person name="Hunkapiller M.W."/>
            <person name="Myers E.W."/>
            <person name="Venter J.C."/>
        </authorList>
    </citation>
    <scope>NUCLEOTIDE SEQUENCE [LARGE SCALE GENOMIC DNA]</scope>
</reference>
<reference key="4">
    <citation type="journal article" date="2004" name="Genome Res.">
        <title>The status, quality, and expansion of the NIH full-length cDNA project: the Mammalian Gene Collection (MGC).</title>
        <authorList>
            <consortium name="The MGC Project Team"/>
        </authorList>
    </citation>
    <scope>NUCLEOTIDE SEQUENCE [LARGE SCALE MRNA] (ISOFORMS 1 AND 4)</scope>
    <source>
        <tissue>Eye</tissue>
        <tissue>Placenta</tissue>
        <tissue>Testis</tissue>
    </source>
</reference>
<reference key="5">
    <citation type="journal article" date="2001" name="Genome Res.">
        <title>Towards a catalog of human genes and proteins: sequencing and analysis of 500 novel complete protein coding human cDNAs.</title>
        <authorList>
            <person name="Wiemann S."/>
            <person name="Weil B."/>
            <person name="Wellenreuther R."/>
            <person name="Gassenhuber J."/>
            <person name="Glassl S."/>
            <person name="Ansorge W."/>
            <person name="Boecher M."/>
            <person name="Bloecker H."/>
            <person name="Bauersachs S."/>
            <person name="Blum H."/>
            <person name="Lauber J."/>
            <person name="Duesterhoeft A."/>
            <person name="Beyer A."/>
            <person name="Koehrer K."/>
            <person name="Strack N."/>
            <person name="Mewes H.-W."/>
            <person name="Ottenwaelder B."/>
            <person name="Obermaier B."/>
            <person name="Tampe J."/>
            <person name="Heubner D."/>
            <person name="Wambutt R."/>
            <person name="Korn B."/>
            <person name="Klein M."/>
            <person name="Poustka A."/>
        </authorList>
    </citation>
    <scope>NUCLEOTIDE SEQUENCE [LARGE SCALE MRNA] OF 273-716 (ISOFORM 3)</scope>
    <source>
        <tissue>Amygdala</tissue>
    </source>
</reference>
<reference key="6">
    <citation type="journal article" date="2008" name="Proc. Natl. Acad. Sci. U.S.A.">
        <title>A quantitative atlas of mitotic phosphorylation.</title>
        <authorList>
            <person name="Dephoure N."/>
            <person name="Zhou C."/>
            <person name="Villen J."/>
            <person name="Beausoleil S.A."/>
            <person name="Bakalarski C.E."/>
            <person name="Elledge S.J."/>
            <person name="Gygi S.P."/>
        </authorList>
    </citation>
    <scope>PHOSPHORYLATION [LARGE SCALE ANALYSIS] AT SER-21 AND SER-696</scope>
    <scope>IDENTIFICATION BY MASS SPECTROMETRY [LARGE SCALE ANALYSIS]</scope>
    <source>
        <tissue>Cervix carcinoma</tissue>
    </source>
</reference>
<reference key="7">
    <citation type="journal article" date="2009" name="Anal. Chem.">
        <title>Lys-N and trypsin cover complementary parts of the phosphoproteome in a refined SCX-based approach.</title>
        <authorList>
            <person name="Gauci S."/>
            <person name="Helbig A.O."/>
            <person name="Slijper M."/>
            <person name="Krijgsveld J."/>
            <person name="Heck A.J."/>
            <person name="Mohammed S."/>
        </authorList>
    </citation>
    <scope>IDENTIFICATION BY MASS SPECTROMETRY [LARGE SCALE ANALYSIS]</scope>
</reference>
<reference key="8">
    <citation type="journal article" date="2010" name="Sci. Signal.">
        <title>Quantitative phosphoproteomics reveals widespread full phosphorylation site occupancy during mitosis.</title>
        <authorList>
            <person name="Olsen J.V."/>
            <person name="Vermeulen M."/>
            <person name="Santamaria A."/>
            <person name="Kumar C."/>
            <person name="Miller M.L."/>
            <person name="Jensen L.J."/>
            <person name="Gnad F."/>
            <person name="Cox J."/>
            <person name="Jensen T.S."/>
            <person name="Nigg E.A."/>
            <person name="Brunak S."/>
            <person name="Mann M."/>
        </authorList>
    </citation>
    <scope>PHOSPHORYLATION [LARGE SCALE ANALYSIS] AT SER-21; SER-261; SER-503 AND SER-591</scope>
    <scope>IDENTIFICATION BY MASS SPECTROMETRY [LARGE SCALE ANALYSIS]</scope>
    <source>
        <tissue>Cervix carcinoma</tissue>
    </source>
</reference>
<reference key="9">
    <citation type="journal article" date="2013" name="J. Proteome Res.">
        <title>Toward a comprehensive characterization of a human cancer cell phosphoproteome.</title>
        <authorList>
            <person name="Zhou H."/>
            <person name="Di Palma S."/>
            <person name="Preisinger C."/>
            <person name="Peng M."/>
            <person name="Polat A.N."/>
            <person name="Heck A.J."/>
            <person name="Mohammed S."/>
        </authorList>
    </citation>
    <scope>PHOSPHORYLATION [LARGE SCALE ANALYSIS] AT SER-21; SER-371; SER-503 AND SER-696</scope>
    <scope>IDENTIFICATION BY MASS SPECTROMETRY [LARGE SCALE ANALYSIS]</scope>
    <source>
        <tissue>Cervix carcinoma</tissue>
        <tissue>Erythroleukemia</tissue>
    </source>
</reference>
<reference key="10">
    <citation type="journal article" date="2014" name="Nat. Struct. Mol. Biol.">
        <title>Uncovering global SUMOylation signaling networks in a site-specific manner.</title>
        <authorList>
            <person name="Hendriks I.A."/>
            <person name="D'Souza R.C."/>
            <person name="Yang B."/>
            <person name="Verlaan-de Vries M."/>
            <person name="Mann M."/>
            <person name="Vertegaal A.C."/>
        </authorList>
    </citation>
    <scope>SUMOYLATION [LARGE SCALE ANALYSIS] AT LYS-393</scope>
    <scope>IDENTIFICATION BY MASS SPECTROMETRY [LARGE SCALE ANALYSIS]</scope>
</reference>
<reference key="11">
    <citation type="journal article" date="2017" name="Nat. Struct. Mol. Biol.">
        <title>Site-specific mapping of the human SUMO proteome reveals co-modification with phosphorylation.</title>
        <authorList>
            <person name="Hendriks I.A."/>
            <person name="Lyon D."/>
            <person name="Young C."/>
            <person name="Jensen L.J."/>
            <person name="Vertegaal A.C."/>
            <person name="Nielsen M.L."/>
        </authorList>
    </citation>
    <scope>SUMOYLATION [LARGE SCALE ANALYSIS] AT LYS-134; LYS-393 AND LYS-685</scope>
    <scope>IDENTIFICATION BY MASS SPECTROMETRY [LARGE SCALE ANALYSIS]</scope>
</reference>
<reference key="12">
    <citation type="journal article" date="2018" name="Mol. Cancer Res.">
        <title>FLYWCH1, a Novel Suppressor of Nuclear beta-Catenin, Regulates Migration and Morphology in Colorectal Cancer.</title>
        <authorList>
            <person name="Muhammad B.A."/>
            <person name="Almozyan S."/>
            <person name="Babaei-Jadidi R."/>
            <person name="Onyido E.K."/>
            <person name="Saadeddin A."/>
            <person name="Kashfi S.H."/>
            <person name="Spencer-Dene B."/>
            <person name="Ilyas M."/>
            <person name="Lourdusamy A."/>
            <person name="Behrens A."/>
            <person name="Nateri A.S."/>
        </authorList>
    </citation>
    <scope>FUNCTION</scope>
    <scope>SUBCELLULAR LOCATION</scope>
    <scope>INTERACTION WITH CTNNB1</scope>
</reference>
<reference key="13">
    <citation type="journal article" date="2021" name="Cells">
        <title>FLYWCH1, a Multi-Functional Zinc Finger Protein Contributes to the DNA Repair Pathway.</title>
        <authorList>
            <person name="Almozyan S."/>
            <person name="Coulton J."/>
            <person name="Babaei-Jadidi R."/>
            <person name="Nateri A.S."/>
        </authorList>
    </citation>
    <scope>FUNCTION</scope>
    <scope>INDUCTION BY UV</scope>
</reference>
<reference key="14">
    <citation type="journal article" date="2021" name="Nat. Commun.">
        <title>Off-the-shelf proximity biotinylation for interaction proteomics.</title>
        <authorList>
            <person name="Santos-Barriopedro I."/>
            <person name="van Mierlo G."/>
            <person name="Vermeulen M."/>
        </authorList>
    </citation>
    <scope>FUNCTION</scope>
    <scope>SUBCELLULAR LOCATION</scope>
</reference>
<reference key="15">
    <citation type="submission" date="2009-08" db="PDB data bank">
        <title>Solution structure of the fifth FLYWCH domain of FLYWCH-type zinc finger-containing protein 1.</title>
        <authorList>
            <consortium name="RIKEN structural genomics initiative (RSGI)"/>
        </authorList>
    </citation>
    <scope>STRUCTURE BY NMR OF 595-674</scope>
</reference>
<comment type="function">
    <text evidence="2 3 4">Transcription cofactor (PubMed:30097457). Negatively regulates transcription activation by catenin beta-1 CTNNB1, perhaps acting by competing with TCF4 for CTNNB1 binding (PubMed:30097457). May play a role in DNA-damage response signaling (PubMed:33924684). Binds specifically to DNA sequences at peri-centromeric chromatin loci.</text>
</comment>
<comment type="subunit">
    <text evidence="2">Interacts with CTNNB1 (when unphosphorylated), perhaps preventing interaction of CTNNB1 with TCF4, and thereby regulating transcription activation; phosphorylation of CTNNB1 may inhibit the interaction.</text>
</comment>
<comment type="interaction">
    <interactant intactId="EBI-719415">
        <id>Q4VC44</id>
    </interactant>
    <interactant intactId="EBI-11977221">
        <id>Q86Z20</id>
        <label>CCDC125</label>
    </interactant>
    <organismsDiffer>false</organismsDiffer>
    <experiments>3</experiments>
</comment>
<comment type="interaction">
    <interactant intactId="EBI-719415">
        <id>Q4VC44</id>
    </interactant>
    <interactant intactId="EBI-2548508">
        <id>Q96IK5</id>
        <label>GMCL1</label>
    </interactant>
    <organismsDiffer>false</organismsDiffer>
    <experiments>3</experiments>
</comment>
<comment type="interaction">
    <interactant intactId="EBI-719415">
        <id>Q4VC44</id>
    </interactant>
    <interactant intactId="EBI-5916454">
        <id>A6NEM1</id>
        <label>GOLGA6L9</label>
    </interactant>
    <organismsDiffer>false</organismsDiffer>
    <experiments>3</experiments>
</comment>
<comment type="interaction">
    <interactant intactId="EBI-719415">
        <id>Q4VC44</id>
    </interactant>
    <interactant intactId="EBI-10961706">
        <id>Q96ED9-2</id>
        <label>HOOK2</label>
    </interactant>
    <organismsDiffer>false</organismsDiffer>
    <experiments>3</experiments>
</comment>
<comment type="interaction">
    <interactant intactId="EBI-719415">
        <id>Q4VC44</id>
    </interactant>
    <interactant intactId="EBI-7116203">
        <id>O75031</id>
        <label>HSF2BP</label>
    </interactant>
    <organismsDiffer>false</organismsDiffer>
    <experiments>3</experiments>
</comment>
<comment type="interaction">
    <interactant intactId="EBI-719415">
        <id>Q4VC44</id>
    </interactant>
    <interactant intactId="EBI-14069005">
        <id>Q9BVG8-5</id>
        <label>KIFC3</label>
    </interactant>
    <organismsDiffer>false</organismsDiffer>
    <experiments>3</experiments>
</comment>
<comment type="interaction">
    <interactant intactId="EBI-719415">
        <id>Q4VC44</id>
    </interactant>
    <interactant intactId="EBI-12179869">
        <id>P50458</id>
        <label>LHX2</label>
    </interactant>
    <organismsDiffer>false</organismsDiffer>
    <experiments>3</experiments>
</comment>
<comment type="interaction">
    <interactant intactId="EBI-719415">
        <id>Q4VC44</id>
    </interactant>
    <interactant intactId="EBI-11522433">
        <id>Q5JR59-3</id>
        <label>MTUS2</label>
    </interactant>
    <organismsDiffer>false</organismsDiffer>
    <experiments>3</experiments>
</comment>
<comment type="interaction">
    <interactant intactId="EBI-719415">
        <id>Q4VC44</id>
    </interactant>
    <interactant intactId="EBI-79165">
        <id>Q9NRD5</id>
        <label>PICK1</label>
    </interactant>
    <organismsDiffer>false</organismsDiffer>
    <experiments>3</experiments>
</comment>
<comment type="interaction">
    <interactant intactId="EBI-719415">
        <id>Q4VC44</id>
    </interactant>
    <interactant intactId="EBI-10293968">
        <id>Q96T49</id>
        <label>PPP1R16B</label>
    </interactant>
    <organismsDiffer>false</organismsDiffer>
    <experiments>3</experiments>
</comment>
<comment type="interaction">
    <interactant intactId="EBI-719415">
        <id>Q4VC44</id>
    </interactant>
    <interactant intactId="EBI-355744">
        <id>Q12933</id>
        <label>TRAF2</label>
    </interactant>
    <organismsDiffer>false</organismsDiffer>
    <experiments>3</experiments>
</comment>
<comment type="subcellular location">
    <subcellularLocation>
        <location evidence="3">Nucleus</location>
    </subcellularLocation>
    <subcellularLocation>
        <location evidence="4">Chromosome</location>
        <location evidence="4">Centromere</location>
    </subcellularLocation>
    <text evidence="4">Localized to peri-centromeric, H3K9me3-marked heterochromatin.</text>
</comment>
<comment type="alternative products">
    <event type="alternative splicing"/>
    <isoform>
        <id>Q4VC44-1</id>
        <name>1</name>
        <sequence type="displayed"/>
    </isoform>
    <isoform>
        <id>Q4VC44-2</id>
        <name>2</name>
        <sequence type="described" ref="VSP_030279"/>
    </isoform>
    <isoform>
        <id>Q4VC44-3</id>
        <name>3</name>
        <sequence type="described" ref="VSP_030281"/>
    </isoform>
    <isoform>
        <id>Q4VC44-4</id>
        <name>4</name>
        <sequence type="described" ref="VSP_030278"/>
    </isoform>
    <isoform>
        <id>Q4VC44-5</id>
        <name>5</name>
        <sequence type="described" ref="VSP_030277 VSP_030280"/>
    </isoform>
</comment>
<comment type="induction">
    <text evidence="3">Up-regulated by ultraviolet (UV) light (at protein level).</text>
</comment>
<comment type="sequence caution" evidence="9">
    <conflict type="erroneous initiation">
        <sequence resource="EMBL-CDS" id="BAB13378"/>
    </conflict>
    <text>Extended N-terminus.</text>
</comment>
<proteinExistence type="evidence at protein level"/>
<protein>
    <recommendedName>
        <fullName>FLYWCH-type zinc finger-containing protein 1</fullName>
    </recommendedName>
</protein>
<feature type="chain" id="PRO_0000314460" description="FLYWCH-type zinc finger-containing protein 1">
    <location>
        <begin position="1"/>
        <end position="716"/>
    </location>
</feature>
<feature type="zinc finger region" description="FLYWCH-type 1">
    <location>
        <begin position="116"/>
        <end position="174"/>
    </location>
</feature>
<feature type="zinc finger region" description="FLYWCH-type 2">
    <location>
        <begin position="273"/>
        <end position="331"/>
    </location>
</feature>
<feature type="zinc finger region" description="FLYWCH-type 3">
    <location>
        <begin position="421"/>
        <end position="479"/>
    </location>
</feature>
<feature type="zinc finger region" description="FLYWCH-type 4">
    <location>
        <begin position="509"/>
        <end position="567"/>
    </location>
</feature>
<feature type="zinc finger region" description="FLYWCH-type 5">
    <location>
        <begin position="600"/>
        <end position="658"/>
    </location>
</feature>
<feature type="region of interest" description="Disordered" evidence="1">
    <location>
        <begin position="1"/>
        <end position="35"/>
    </location>
</feature>
<feature type="region of interest" description="Disordered" evidence="1">
    <location>
        <begin position="191"/>
        <end position="231"/>
    </location>
</feature>
<feature type="region of interest" description="Disordered" evidence="1">
    <location>
        <begin position="377"/>
        <end position="421"/>
    </location>
</feature>
<feature type="compositionally biased region" description="Low complexity" evidence="1">
    <location>
        <begin position="195"/>
        <end position="204"/>
    </location>
</feature>
<feature type="modified residue" description="Phosphoserine" evidence="10 11 12">
    <location>
        <position position="21"/>
    </location>
</feature>
<feature type="modified residue" description="Phosphoserine" evidence="11">
    <location>
        <position position="261"/>
    </location>
</feature>
<feature type="modified residue" description="Phosphoserine" evidence="12">
    <location>
        <position position="371"/>
    </location>
</feature>
<feature type="modified residue" description="Phosphoserine" evidence="11 12">
    <location>
        <position position="503"/>
    </location>
</feature>
<feature type="modified residue" description="Phosphoserine" evidence="11">
    <location>
        <position position="591"/>
    </location>
</feature>
<feature type="modified residue" description="Phosphoserine" evidence="10 12">
    <location>
        <position position="696"/>
    </location>
</feature>
<feature type="cross-link" description="Glycyl lysine isopeptide (Lys-Gly) (interchain with G-Cter in SUMO2)" evidence="14">
    <location>
        <position position="134"/>
    </location>
</feature>
<feature type="cross-link" description="Glycyl lysine isopeptide (Lys-Gly) (interchain with G-Cter in SUMO2)" evidence="13 14">
    <location>
        <position position="393"/>
    </location>
</feature>
<feature type="cross-link" description="Glycyl lysine isopeptide (Lys-Gly) (interchain with G-Cter in SUMO2)" evidence="14">
    <location>
        <position position="685"/>
    </location>
</feature>
<feature type="splice variant" id="VSP_030277" description="In isoform 5." evidence="7">
    <location>
        <begin position="1"/>
        <end position="388"/>
    </location>
</feature>
<feature type="splice variant" id="VSP_030278" description="In isoform 4." evidence="8">
    <location>
        <begin position="1"/>
        <end position="325"/>
    </location>
</feature>
<feature type="splice variant" id="VSP_030279" description="In isoform 2." evidence="5">
    <location>
        <position position="108"/>
    </location>
</feature>
<feature type="splice variant" id="VSP_030280" description="In isoform 5." evidence="7">
    <original>RKRAKVEDQELPTQPEAPDEHQDMDADPGGPEFLKTPLGGSFLVYESFLYRREKAAGEKVYWTCRDQARMGCRSRAITQGRRVTVMRGHCHPPDLGGLEALRQREKRPNTAQRGSP</original>
    <variation>MPQATSPPLWPLSLHGGKGILWARHSHPPGPPSHHIQDSGRCSLPLPQSPGVTPLPARLSGATPLSPIRLLSSFVPRGPRVIPLTNQARRTLHASLGGCWGRTSDAADTASLKAWQ</variation>
    <location>
        <begin position="389"/>
        <end position="504"/>
    </location>
</feature>
<feature type="splice variant" id="VSP_030281" description="In isoform 3." evidence="6">
    <original>P</original>
    <variation>PGAGLSFQWLFRILQLLGHAPVLLCPSGSSCLPSLPAPHGPCPALSIPLE</variation>
    <location>
        <position position="504"/>
    </location>
</feature>
<feature type="sequence conflict" description="In Ref. 4; AAH28572." evidence="9" ref="4">
    <original>E</original>
    <variation>G</variation>
    <location>
        <position position="666"/>
    </location>
</feature>
<feature type="strand" evidence="15">
    <location>
        <begin position="599"/>
        <end position="603"/>
    </location>
</feature>
<feature type="turn" evidence="15">
    <location>
        <begin position="604"/>
        <end position="606"/>
    </location>
</feature>
<feature type="strand" evidence="15">
    <location>
        <begin position="607"/>
        <end position="612"/>
    </location>
</feature>
<feature type="strand" evidence="15">
    <location>
        <begin position="615"/>
        <end position="622"/>
    </location>
</feature>
<feature type="strand" evidence="15">
    <location>
        <begin position="627"/>
        <end position="631"/>
    </location>
</feature>
<feature type="helix" evidence="15">
    <location>
        <begin position="632"/>
        <end position="634"/>
    </location>
</feature>
<feature type="strand" evidence="15">
    <location>
        <begin position="642"/>
        <end position="646"/>
    </location>
</feature>
<feature type="strand" evidence="15">
    <location>
        <begin position="649"/>
        <end position="652"/>
    </location>
</feature>
<feature type="helix" evidence="15">
    <location>
        <begin position="662"/>
        <end position="670"/>
    </location>
</feature>
<dbReference type="EMBL" id="AB046772">
    <property type="protein sequence ID" value="BAB13378.1"/>
    <property type="status" value="ALT_INIT"/>
    <property type="molecule type" value="mRNA"/>
</dbReference>
<dbReference type="EMBL" id="AK127235">
    <property type="protein sequence ID" value="BAC86896.1"/>
    <property type="molecule type" value="mRNA"/>
</dbReference>
<dbReference type="EMBL" id="CH471112">
    <property type="protein sequence ID" value="EAW85450.1"/>
    <property type="molecule type" value="Genomic_DNA"/>
</dbReference>
<dbReference type="EMBL" id="CH471112">
    <property type="protein sequence ID" value="EAW85451.1"/>
    <property type="molecule type" value="Genomic_DNA"/>
</dbReference>
<dbReference type="EMBL" id="BC001973">
    <property type="protein sequence ID" value="AAH01973.1"/>
    <property type="molecule type" value="mRNA"/>
</dbReference>
<dbReference type="EMBL" id="BC018712">
    <property type="protein sequence ID" value="AAH18712.1"/>
    <property type="molecule type" value="mRNA"/>
</dbReference>
<dbReference type="EMBL" id="BC028572">
    <property type="protein sequence ID" value="AAH28572.1"/>
    <property type="molecule type" value="mRNA"/>
</dbReference>
<dbReference type="EMBL" id="AL136585">
    <property type="protein sequence ID" value="CAB66520.2"/>
    <property type="molecule type" value="mRNA"/>
</dbReference>
<dbReference type="CCDS" id="CCDS45390.1">
    <molecule id="Q4VC44-2"/>
</dbReference>
<dbReference type="CCDS" id="CCDS76809.1">
    <molecule id="Q4VC44-1"/>
</dbReference>
<dbReference type="RefSeq" id="NP_001294997.1">
    <molecule id="Q4VC44-1"/>
    <property type="nucleotide sequence ID" value="NM_001308068.2"/>
</dbReference>
<dbReference type="RefSeq" id="NP_065963.1">
    <property type="nucleotide sequence ID" value="NM_020912.1"/>
</dbReference>
<dbReference type="RefSeq" id="NP_115672.2">
    <molecule id="Q4VC44-2"/>
    <property type="nucleotide sequence ID" value="NM_032296.3"/>
</dbReference>
<dbReference type="RefSeq" id="XP_006721025.1">
    <molecule id="Q4VC44-3"/>
    <property type="nucleotide sequence ID" value="XM_006720962.4"/>
</dbReference>
<dbReference type="RefSeq" id="XP_047290732.1">
    <molecule id="Q4VC44-3"/>
    <property type="nucleotide sequence ID" value="XM_047434776.1"/>
</dbReference>
<dbReference type="RefSeq" id="XP_047290734.1">
    <molecule id="Q4VC44-1"/>
    <property type="nucleotide sequence ID" value="XM_047434778.1"/>
</dbReference>
<dbReference type="RefSeq" id="XP_047290735.1">
    <molecule id="Q4VC44-1"/>
    <property type="nucleotide sequence ID" value="XM_047434779.1"/>
</dbReference>
<dbReference type="RefSeq" id="XP_047290736.1">
    <molecule id="Q4VC44-1"/>
    <property type="nucleotide sequence ID" value="XM_047434780.1"/>
</dbReference>
<dbReference type="RefSeq" id="XP_047290737.1">
    <molecule id="Q4VC44-1"/>
    <property type="nucleotide sequence ID" value="XM_047434781.1"/>
</dbReference>
<dbReference type="RefSeq" id="XP_047290738.1">
    <molecule id="Q4VC44-2"/>
    <property type="nucleotide sequence ID" value="XM_047434782.1"/>
</dbReference>
<dbReference type="RefSeq" id="XP_047290739.1">
    <molecule id="Q4VC44-2"/>
    <property type="nucleotide sequence ID" value="XM_047434783.1"/>
</dbReference>
<dbReference type="RefSeq" id="XP_047290740.1">
    <molecule id="Q4VC44-2"/>
    <property type="nucleotide sequence ID" value="XM_047434784.1"/>
</dbReference>
<dbReference type="RefSeq" id="XP_054170141.1">
    <molecule id="Q4VC44-3"/>
    <property type="nucleotide sequence ID" value="XM_054314166.1"/>
</dbReference>
<dbReference type="RefSeq" id="XP_054170142.1">
    <molecule id="Q4VC44-3"/>
    <property type="nucleotide sequence ID" value="XM_054314167.1"/>
</dbReference>
<dbReference type="RefSeq" id="XP_054170144.1">
    <molecule id="Q4VC44-1"/>
    <property type="nucleotide sequence ID" value="XM_054314169.1"/>
</dbReference>
<dbReference type="RefSeq" id="XP_054170145.1">
    <molecule id="Q4VC44-1"/>
    <property type="nucleotide sequence ID" value="XM_054314170.1"/>
</dbReference>
<dbReference type="RefSeq" id="XP_054170146.1">
    <molecule id="Q4VC44-1"/>
    <property type="nucleotide sequence ID" value="XM_054314171.1"/>
</dbReference>
<dbReference type="RefSeq" id="XP_054170147.1">
    <molecule id="Q4VC44-1"/>
    <property type="nucleotide sequence ID" value="XM_054314172.1"/>
</dbReference>
<dbReference type="RefSeq" id="XP_054170148.1">
    <molecule id="Q4VC44-2"/>
    <property type="nucleotide sequence ID" value="XM_054314173.1"/>
</dbReference>
<dbReference type="RefSeq" id="XP_054170149.1">
    <molecule id="Q4VC44-2"/>
    <property type="nucleotide sequence ID" value="XM_054314174.1"/>
</dbReference>
<dbReference type="RefSeq" id="XP_054170150.1">
    <molecule id="Q4VC44-2"/>
    <property type="nucleotide sequence ID" value="XM_054314175.1"/>
</dbReference>
<dbReference type="PDB" id="2RPR">
    <property type="method" value="NMR"/>
    <property type="chains" value="A=595-674"/>
</dbReference>
<dbReference type="PDBsum" id="2RPR"/>
<dbReference type="SMR" id="Q4VC44"/>
<dbReference type="BioGRID" id="123983">
    <property type="interactions" value="37"/>
</dbReference>
<dbReference type="FunCoup" id="Q4VC44">
    <property type="interactions" value="568"/>
</dbReference>
<dbReference type="IntAct" id="Q4VC44">
    <property type="interactions" value="29"/>
</dbReference>
<dbReference type="MINT" id="Q4VC44"/>
<dbReference type="STRING" id="9606.ENSP00000253928"/>
<dbReference type="GlyGen" id="Q4VC44">
    <property type="glycosylation" value="2 sites"/>
</dbReference>
<dbReference type="iPTMnet" id="Q4VC44"/>
<dbReference type="PhosphoSitePlus" id="Q4VC44"/>
<dbReference type="SwissPalm" id="Q4VC44"/>
<dbReference type="BioMuta" id="FLYWCH1"/>
<dbReference type="DMDM" id="166217021"/>
<dbReference type="jPOST" id="Q4VC44"/>
<dbReference type="MassIVE" id="Q4VC44"/>
<dbReference type="PaxDb" id="9606-ENSP00000399938"/>
<dbReference type="PeptideAtlas" id="Q4VC44"/>
<dbReference type="ProteomicsDB" id="62302">
    <molecule id="Q4VC44-1"/>
</dbReference>
<dbReference type="ProteomicsDB" id="62303">
    <molecule id="Q4VC44-2"/>
</dbReference>
<dbReference type="ProteomicsDB" id="62304">
    <molecule id="Q4VC44-3"/>
</dbReference>
<dbReference type="ProteomicsDB" id="62305">
    <molecule id="Q4VC44-4"/>
</dbReference>
<dbReference type="ProteomicsDB" id="62306">
    <molecule id="Q4VC44-5"/>
</dbReference>
<dbReference type="Pumba" id="Q4VC44"/>
<dbReference type="Antibodypedia" id="23928">
    <property type="antibodies" value="52 antibodies from 14 providers"/>
</dbReference>
<dbReference type="DNASU" id="84256"/>
<dbReference type="Ensembl" id="ENST00000253928.14">
    <molecule id="Q4VC44-1"/>
    <property type="protein sequence ID" value="ENSP00000253928.9"/>
    <property type="gene ID" value="ENSG00000059122.17"/>
</dbReference>
<dbReference type="Ensembl" id="ENST00000416288.6">
    <molecule id="Q4VC44-2"/>
    <property type="protein sequence ID" value="ENSP00000399938.2"/>
    <property type="gene ID" value="ENSG00000059122.17"/>
</dbReference>
<dbReference type="GeneID" id="84256"/>
<dbReference type="KEGG" id="hsa:84256"/>
<dbReference type="MANE-Select" id="ENST00000253928.14">
    <property type="protein sequence ID" value="ENSP00000253928.9"/>
    <property type="RefSeq nucleotide sequence ID" value="NM_001308068.2"/>
    <property type="RefSeq protein sequence ID" value="NP_001294997.1"/>
</dbReference>
<dbReference type="UCSC" id="uc002csc.4">
    <molecule id="Q4VC44-1"/>
    <property type="organism name" value="human"/>
</dbReference>
<dbReference type="AGR" id="HGNC:25404"/>
<dbReference type="CTD" id="84256"/>
<dbReference type="DisGeNET" id="84256"/>
<dbReference type="GeneCards" id="FLYWCH1"/>
<dbReference type="HGNC" id="HGNC:25404">
    <property type="gene designation" value="FLYWCH1"/>
</dbReference>
<dbReference type="HPA" id="ENSG00000059122">
    <property type="expression patterns" value="Low tissue specificity"/>
</dbReference>
<dbReference type="MalaCards" id="FLYWCH1"/>
<dbReference type="MIM" id="620431">
    <property type="type" value="gene"/>
</dbReference>
<dbReference type="neXtProt" id="NX_Q4VC44"/>
<dbReference type="OpenTargets" id="ENSG00000059122"/>
<dbReference type="PharmGKB" id="PA142671760"/>
<dbReference type="VEuPathDB" id="HostDB:ENSG00000059122"/>
<dbReference type="eggNOG" id="ENOG502SQTE">
    <property type="taxonomic scope" value="Eukaryota"/>
</dbReference>
<dbReference type="GeneTree" id="ENSGT00530000064166"/>
<dbReference type="HOGENOM" id="CLU_023177_0_0_1"/>
<dbReference type="InParanoid" id="Q4VC44"/>
<dbReference type="OMA" id="NLAQWEG"/>
<dbReference type="OrthoDB" id="7962512at2759"/>
<dbReference type="PAN-GO" id="Q4VC44">
    <property type="GO annotations" value="0 GO annotations based on evolutionary models"/>
</dbReference>
<dbReference type="PhylomeDB" id="Q4VC44"/>
<dbReference type="TreeFam" id="TF337169"/>
<dbReference type="PathwayCommons" id="Q4VC44"/>
<dbReference type="SignaLink" id="Q4VC44"/>
<dbReference type="BioGRID-ORCS" id="84256">
    <property type="hits" value="42 hits in 1158 CRISPR screens"/>
</dbReference>
<dbReference type="ChiTaRS" id="FLYWCH1">
    <property type="organism name" value="human"/>
</dbReference>
<dbReference type="EvolutionaryTrace" id="Q4VC44"/>
<dbReference type="GenomeRNAi" id="84256"/>
<dbReference type="Pharos" id="Q4VC44">
    <property type="development level" value="Tdark"/>
</dbReference>
<dbReference type="PRO" id="PR:Q4VC44"/>
<dbReference type="Proteomes" id="UP000005640">
    <property type="component" value="Chromosome 16"/>
</dbReference>
<dbReference type="RNAct" id="Q4VC44">
    <property type="molecule type" value="protein"/>
</dbReference>
<dbReference type="Bgee" id="ENSG00000059122">
    <property type="expression patterns" value="Expressed in right hemisphere of cerebellum and 176 other cell types or tissues"/>
</dbReference>
<dbReference type="ExpressionAtlas" id="Q4VC44">
    <property type="expression patterns" value="baseline and differential"/>
</dbReference>
<dbReference type="GO" id="GO:0005829">
    <property type="term" value="C:cytosol"/>
    <property type="evidence" value="ECO:0000314"/>
    <property type="project" value="HPA"/>
</dbReference>
<dbReference type="GO" id="GO:0016604">
    <property type="term" value="C:nuclear body"/>
    <property type="evidence" value="ECO:0000314"/>
    <property type="project" value="HPA"/>
</dbReference>
<dbReference type="GO" id="GO:0005654">
    <property type="term" value="C:nucleoplasm"/>
    <property type="evidence" value="ECO:0000314"/>
    <property type="project" value="HPA"/>
</dbReference>
<dbReference type="GO" id="GO:0005721">
    <property type="term" value="C:pericentric heterochromatin"/>
    <property type="evidence" value="ECO:0000314"/>
    <property type="project" value="UniProtKB"/>
</dbReference>
<dbReference type="GO" id="GO:0005667">
    <property type="term" value="C:transcription regulator complex"/>
    <property type="evidence" value="ECO:0000315"/>
    <property type="project" value="UniProtKB"/>
</dbReference>
<dbReference type="GO" id="GO:0003677">
    <property type="term" value="F:DNA binding"/>
    <property type="evidence" value="ECO:0007669"/>
    <property type="project" value="UniProtKB-KW"/>
</dbReference>
<dbReference type="GO" id="GO:0001223">
    <property type="term" value="F:transcription coactivator binding"/>
    <property type="evidence" value="ECO:0000353"/>
    <property type="project" value="UniProtKB"/>
</dbReference>
<dbReference type="GO" id="GO:0003714">
    <property type="term" value="F:transcription corepressor activity"/>
    <property type="evidence" value="ECO:0000314"/>
    <property type="project" value="UniProtKB"/>
</dbReference>
<dbReference type="GO" id="GO:0008270">
    <property type="term" value="F:zinc ion binding"/>
    <property type="evidence" value="ECO:0007669"/>
    <property type="project" value="UniProtKB-KW"/>
</dbReference>
<dbReference type="GO" id="GO:0006974">
    <property type="term" value="P:DNA damage response"/>
    <property type="evidence" value="ECO:0000315"/>
    <property type="project" value="UniProtKB"/>
</dbReference>
<dbReference type="GO" id="GO:0000122">
    <property type="term" value="P:negative regulation of transcription by RNA polymerase II"/>
    <property type="evidence" value="ECO:0000315"/>
    <property type="project" value="UniProtKB"/>
</dbReference>
<dbReference type="FunFam" id="2.20.25.240:FF:000001">
    <property type="entry name" value="FLYWCH-type zinc finger-containing protein 1"/>
    <property type="match status" value="5"/>
</dbReference>
<dbReference type="Gene3D" id="2.20.25.240">
    <property type="match status" value="5"/>
</dbReference>
<dbReference type="InterPro" id="IPR029279">
    <property type="entry name" value="FLYWCH_N"/>
</dbReference>
<dbReference type="InterPro" id="IPR040312">
    <property type="entry name" value="FWCH1/FWCH2"/>
</dbReference>
<dbReference type="InterPro" id="IPR007588">
    <property type="entry name" value="Znf_FLYWCH"/>
</dbReference>
<dbReference type="PANTHER" id="PTHR31665">
    <property type="entry name" value="FLYWCH FAMILY MEMBER 2-RELATED"/>
    <property type="match status" value="1"/>
</dbReference>
<dbReference type="PANTHER" id="PTHR31665:SF3">
    <property type="entry name" value="FLYWCH-TYPE ZINC FINGER-CONTAINING PROTEIN 1"/>
    <property type="match status" value="1"/>
</dbReference>
<dbReference type="Pfam" id="PF04500">
    <property type="entry name" value="FLYWCH"/>
    <property type="match status" value="5"/>
</dbReference>
<dbReference type="Pfam" id="PF15423">
    <property type="entry name" value="FLYWCH_N"/>
    <property type="match status" value="1"/>
</dbReference>
<dbReference type="Pfam" id="PF16662">
    <property type="entry name" value="FLYWCH_u"/>
    <property type="match status" value="1"/>
</dbReference>
<sequence>MPLPEPSEQEGESVKAGQEPSPKPGTDVIPAAPRKPREFSKLVLLTASDQDEDGVGSKPQEVHCVLSLEMAGPATLASTLQILPVEEQGGVVQPALEMPEQKCSKLDAAAPQSLEFLRTPFGGRLLVLESFLYKQEKAVGDKVYWKCRQHAELGCRGRAITRGLRATVMRGHCHAPDEQGLEARRQREKLPSLALPEGLGEPQGPEGPGGRVEEPLEGVGPWQCPEEPEPTPGLVLSKPALEEEEAPRALSLLSLPPKKRSILGLGQARPLEFLRTCYGGSFLVHESFLYKREKAVGDKVYWTCRDHALHGCRSRAITQGQRVTVMRGHCHQPDMEGLEARRQQEKAVETLQAGQDGPGSQVDTLLRGVDSLLYRRGPGPLTLTRPRPRKRAKVEDQELPTQPEAPDEHQDMDADPGGPEFLKTPLGGSFLVYESFLYRREKAAGEKVYWTCRDQARMGCRSRAITQGRRVTVMRGHCHPPDLGGLEALRQREKRPNTAQRGSPGGPEFLKTPLGGSFLVYESFLYRREKAAGEKVYWTCRDQARMGCRSRAITQGRRVMVMRRHCHPPDLGGLEALRQREHFPNLAQWDSPDPLRPLEFLRTSLGGRFLVHESFLYRKEKAAGEKVYWMCRDQARLGCRSRAITQGHRIMVMRSHCHQPDLAGLEALRQRERLPTTAQQEDPEKIQVQLCFKTCSPESQQIYGDIKDVRLDGESQ</sequence>
<keyword id="KW-0002">3D-structure</keyword>
<keyword id="KW-0025">Alternative splicing</keyword>
<keyword id="KW-0137">Centromere</keyword>
<keyword id="KW-0158">Chromosome</keyword>
<keyword id="KW-0227">DNA damage</keyword>
<keyword id="KW-0238">DNA-binding</keyword>
<keyword id="KW-1017">Isopeptide bond</keyword>
<keyword id="KW-0479">Metal-binding</keyword>
<keyword id="KW-0539">Nucleus</keyword>
<keyword id="KW-0597">Phosphoprotein</keyword>
<keyword id="KW-1267">Proteomics identification</keyword>
<keyword id="KW-1185">Reference proteome</keyword>
<keyword id="KW-0677">Repeat</keyword>
<keyword id="KW-0804">Transcription</keyword>
<keyword id="KW-0805">Transcription regulation</keyword>
<keyword id="KW-0832">Ubl conjugation</keyword>
<keyword id="KW-0862">Zinc</keyword>
<keyword id="KW-0863">Zinc-finger</keyword>
<name>FWCH1_HUMAN</name>
<evidence type="ECO:0000256" key="1">
    <source>
        <dbReference type="SAM" id="MobiDB-lite"/>
    </source>
</evidence>
<evidence type="ECO:0000269" key="2">
    <source>
    </source>
</evidence>
<evidence type="ECO:0000269" key="3">
    <source>
    </source>
</evidence>
<evidence type="ECO:0000269" key="4">
    <source>
    </source>
</evidence>
<evidence type="ECO:0000303" key="5">
    <source>
    </source>
</evidence>
<evidence type="ECO:0000303" key="6">
    <source>
    </source>
</evidence>
<evidence type="ECO:0000303" key="7">
    <source>
    </source>
</evidence>
<evidence type="ECO:0000303" key="8">
    <source>
    </source>
</evidence>
<evidence type="ECO:0000305" key="9"/>
<evidence type="ECO:0007744" key="10">
    <source>
    </source>
</evidence>
<evidence type="ECO:0007744" key="11">
    <source>
    </source>
</evidence>
<evidence type="ECO:0007744" key="12">
    <source>
    </source>
</evidence>
<evidence type="ECO:0007744" key="13">
    <source>
    </source>
</evidence>
<evidence type="ECO:0007744" key="14">
    <source>
    </source>
</evidence>
<evidence type="ECO:0007829" key="15">
    <source>
        <dbReference type="PDB" id="2RPR"/>
    </source>
</evidence>
<organism>
    <name type="scientific">Homo sapiens</name>
    <name type="common">Human</name>
    <dbReference type="NCBI Taxonomy" id="9606"/>
    <lineage>
        <taxon>Eukaryota</taxon>
        <taxon>Metazoa</taxon>
        <taxon>Chordata</taxon>
        <taxon>Craniata</taxon>
        <taxon>Vertebrata</taxon>
        <taxon>Euteleostomi</taxon>
        <taxon>Mammalia</taxon>
        <taxon>Eutheria</taxon>
        <taxon>Euarchontoglires</taxon>
        <taxon>Primates</taxon>
        <taxon>Haplorrhini</taxon>
        <taxon>Catarrhini</taxon>
        <taxon>Hominidae</taxon>
        <taxon>Homo</taxon>
    </lineage>
</organism>